<comment type="function">
    <text evidence="1">One of the primary rRNA binding proteins, it binds directly to 16S rRNA where it nucleates assembly of the head domain of the 30S subunit. Is located at the subunit interface close to the decoding center, probably blocks exit of the E-site tRNA.</text>
</comment>
<comment type="subunit">
    <text evidence="1">Part of the 30S ribosomal subunit. Contacts proteins S9 and S11.</text>
</comment>
<comment type="similarity">
    <text evidence="1">Belongs to the universal ribosomal protein uS7 family.</text>
</comment>
<protein>
    <recommendedName>
        <fullName evidence="1">Small ribosomal subunit protein uS7</fullName>
    </recommendedName>
    <alternativeName>
        <fullName evidence="2">30S ribosomal protein S7</fullName>
    </alternativeName>
</protein>
<sequence length="156" mass="17988">MARRRRAEVRPLQPDLVYQDVLVSAMINKIMRDGKKNLASRIFYGACRLVQERTGQEPLKVFKQAFDNVKPRVEVRSRRVGGSTYQVPVEPTERRKQSLALRWMLSAVEGRPERTAIERLAGEMMDAAQGRGGAIKKKDDVERMAEANRAYAHYRW</sequence>
<dbReference type="EMBL" id="CP000359">
    <property type="protein sequence ID" value="ABF46167.1"/>
    <property type="molecule type" value="Genomic_DNA"/>
</dbReference>
<dbReference type="RefSeq" id="WP_011530995.1">
    <property type="nucleotide sequence ID" value="NC_008025.1"/>
</dbReference>
<dbReference type="SMR" id="Q1IX67"/>
<dbReference type="STRING" id="319795.Dgeo_1872"/>
<dbReference type="KEGG" id="dge:Dgeo_1872"/>
<dbReference type="eggNOG" id="COG0049">
    <property type="taxonomic scope" value="Bacteria"/>
</dbReference>
<dbReference type="HOGENOM" id="CLU_072226_1_1_0"/>
<dbReference type="Proteomes" id="UP000002431">
    <property type="component" value="Chromosome"/>
</dbReference>
<dbReference type="GO" id="GO:0015935">
    <property type="term" value="C:small ribosomal subunit"/>
    <property type="evidence" value="ECO:0007669"/>
    <property type="project" value="InterPro"/>
</dbReference>
<dbReference type="GO" id="GO:0019843">
    <property type="term" value="F:rRNA binding"/>
    <property type="evidence" value="ECO:0007669"/>
    <property type="project" value="UniProtKB-UniRule"/>
</dbReference>
<dbReference type="GO" id="GO:0003735">
    <property type="term" value="F:structural constituent of ribosome"/>
    <property type="evidence" value="ECO:0007669"/>
    <property type="project" value="InterPro"/>
</dbReference>
<dbReference type="GO" id="GO:0000049">
    <property type="term" value="F:tRNA binding"/>
    <property type="evidence" value="ECO:0007669"/>
    <property type="project" value="UniProtKB-UniRule"/>
</dbReference>
<dbReference type="GO" id="GO:0006412">
    <property type="term" value="P:translation"/>
    <property type="evidence" value="ECO:0007669"/>
    <property type="project" value="UniProtKB-UniRule"/>
</dbReference>
<dbReference type="CDD" id="cd14869">
    <property type="entry name" value="uS7_Bacteria"/>
    <property type="match status" value="1"/>
</dbReference>
<dbReference type="FunFam" id="1.10.455.10:FF:000001">
    <property type="entry name" value="30S ribosomal protein S7"/>
    <property type="match status" value="1"/>
</dbReference>
<dbReference type="Gene3D" id="1.10.455.10">
    <property type="entry name" value="Ribosomal protein S7 domain"/>
    <property type="match status" value="1"/>
</dbReference>
<dbReference type="HAMAP" id="MF_00480_B">
    <property type="entry name" value="Ribosomal_uS7_B"/>
    <property type="match status" value="1"/>
</dbReference>
<dbReference type="InterPro" id="IPR000235">
    <property type="entry name" value="Ribosomal_uS7"/>
</dbReference>
<dbReference type="InterPro" id="IPR005717">
    <property type="entry name" value="Ribosomal_uS7_bac/org-type"/>
</dbReference>
<dbReference type="InterPro" id="IPR020606">
    <property type="entry name" value="Ribosomal_uS7_CS"/>
</dbReference>
<dbReference type="InterPro" id="IPR023798">
    <property type="entry name" value="Ribosomal_uS7_dom"/>
</dbReference>
<dbReference type="InterPro" id="IPR036823">
    <property type="entry name" value="Ribosomal_uS7_dom_sf"/>
</dbReference>
<dbReference type="NCBIfam" id="TIGR01029">
    <property type="entry name" value="rpsG_bact"/>
    <property type="match status" value="1"/>
</dbReference>
<dbReference type="PANTHER" id="PTHR11205">
    <property type="entry name" value="RIBOSOMAL PROTEIN S7"/>
    <property type="match status" value="1"/>
</dbReference>
<dbReference type="Pfam" id="PF00177">
    <property type="entry name" value="Ribosomal_S7"/>
    <property type="match status" value="1"/>
</dbReference>
<dbReference type="PIRSF" id="PIRSF002122">
    <property type="entry name" value="RPS7p_RPS7a_RPS5e_RPS7o"/>
    <property type="match status" value="1"/>
</dbReference>
<dbReference type="SUPFAM" id="SSF47973">
    <property type="entry name" value="Ribosomal protein S7"/>
    <property type="match status" value="1"/>
</dbReference>
<dbReference type="PROSITE" id="PS00052">
    <property type="entry name" value="RIBOSOMAL_S7"/>
    <property type="match status" value="1"/>
</dbReference>
<proteinExistence type="inferred from homology"/>
<keyword id="KW-0687">Ribonucleoprotein</keyword>
<keyword id="KW-0689">Ribosomal protein</keyword>
<keyword id="KW-0694">RNA-binding</keyword>
<keyword id="KW-0699">rRNA-binding</keyword>
<keyword id="KW-0820">tRNA-binding</keyword>
<accession>Q1IX67</accession>
<feature type="chain" id="PRO_1000014183" description="Small ribosomal subunit protein uS7">
    <location>
        <begin position="1"/>
        <end position="156"/>
    </location>
</feature>
<reference key="1">
    <citation type="submission" date="2006-04" db="EMBL/GenBank/DDBJ databases">
        <title>Complete sequence of chromosome of Deinococcus geothermalis DSM 11300.</title>
        <authorList>
            <person name="Copeland A."/>
            <person name="Lucas S."/>
            <person name="Lapidus A."/>
            <person name="Barry K."/>
            <person name="Detter J.C."/>
            <person name="Glavina del Rio T."/>
            <person name="Hammon N."/>
            <person name="Israni S."/>
            <person name="Dalin E."/>
            <person name="Tice H."/>
            <person name="Pitluck S."/>
            <person name="Brettin T."/>
            <person name="Bruce D."/>
            <person name="Han C."/>
            <person name="Tapia R."/>
            <person name="Saunders E."/>
            <person name="Gilna P."/>
            <person name="Schmutz J."/>
            <person name="Larimer F."/>
            <person name="Land M."/>
            <person name="Hauser L."/>
            <person name="Kyrpides N."/>
            <person name="Kim E."/>
            <person name="Daly M.J."/>
            <person name="Fredrickson J.K."/>
            <person name="Makarova K.S."/>
            <person name="Gaidamakova E.K."/>
            <person name="Zhai M."/>
            <person name="Richardson P."/>
        </authorList>
    </citation>
    <scope>NUCLEOTIDE SEQUENCE [LARGE SCALE GENOMIC DNA]</scope>
    <source>
        <strain>DSM 11300 / CIP 105573 / AG-3a</strain>
    </source>
</reference>
<gene>
    <name evidence="1" type="primary">rpsG</name>
    <name type="ordered locus">Dgeo_1872</name>
</gene>
<evidence type="ECO:0000255" key="1">
    <source>
        <dbReference type="HAMAP-Rule" id="MF_00480"/>
    </source>
</evidence>
<evidence type="ECO:0000305" key="2"/>
<organism>
    <name type="scientific">Deinococcus geothermalis (strain DSM 11300 / CIP 105573 / AG-3a)</name>
    <dbReference type="NCBI Taxonomy" id="319795"/>
    <lineage>
        <taxon>Bacteria</taxon>
        <taxon>Thermotogati</taxon>
        <taxon>Deinococcota</taxon>
        <taxon>Deinococci</taxon>
        <taxon>Deinococcales</taxon>
        <taxon>Deinococcaceae</taxon>
        <taxon>Deinococcus</taxon>
    </lineage>
</organism>
<name>RS7_DEIGD</name>